<reference key="1">
    <citation type="journal article" date="1999" name="J. Virol.">
        <title>Identification of a spliced gene from Kaposi's sarcoma-associated herpesvirus encoding a protein with similarities to latent membrane proteins 1 and 2A of Epstein-Barr virus.</title>
        <authorList>
            <person name="Glenn M."/>
            <person name="Rainbow L."/>
            <person name="Aurade F."/>
            <person name="Davison A."/>
            <person name="Schulz T.F."/>
        </authorList>
    </citation>
    <scope>NUCLEOTIDE SEQUENCE [LARGE SCALE GENOMIC DNA]</scope>
</reference>
<reference key="2">
    <citation type="journal article" date="2006" name="J. Gen. Virol.">
        <title>Kaposi's sarcoma-associated herpesvirus immune modulation: an overview.</title>
        <authorList>
            <person name="Rezaee S.A.R."/>
            <person name="Cunningham C."/>
            <person name="Davison A.J."/>
            <person name="Blackbourn D.J."/>
        </authorList>
    </citation>
    <scope>NUCLEOTIDE SEQUENCE [LARGE SCALE GENOMIC DNA]</scope>
</reference>
<reference key="3">
    <citation type="journal article" date="1998" name="Mol. Cell. Biol.">
        <title>Identification of an immunoreceptor tyrosine-based activation motif of K1 transforming protein of Kaposi's sarcoma-associated herpesvirus.</title>
        <authorList>
            <person name="Lee H."/>
            <person name="Guo J."/>
            <person name="Li M."/>
            <person name="Choi J.K."/>
            <person name="DeMaria M."/>
            <person name="Rosenzweig M."/>
            <person name="Jung J.U."/>
        </authorList>
    </citation>
    <scope>FUNCTION</scope>
</reference>
<reference key="4">
    <citation type="journal article" date="1999" name="Proc. Natl. Acad. Sci. U.S.A.">
        <title>Deregulated signal transduction by the K1 gene product of Kaposi's sarcoma-associated herpesvirus.</title>
        <authorList>
            <person name="Lagunoff M."/>
            <person name="Majeti R."/>
            <person name="Weiss A."/>
            <person name="Ganem D."/>
        </authorList>
    </citation>
    <scope>FUNCTION</scope>
    <scope>SUBUNIT</scope>
</reference>
<reference key="5">
    <citation type="journal article" date="2004" name="J. Virol.">
        <title>The K1 protein of Kaposi's sarcoma-associated herpesvirus activates the Akt signaling pathway.</title>
        <authorList>
            <person name="Tomlinson C.C."/>
            <person name="Damania B."/>
        </authorList>
    </citation>
    <scope>FUNCTION</scope>
</reference>
<dbReference type="EMBL" id="AF148805">
    <property type="protein sequence ID" value="ABD28852.1"/>
    <property type="molecule type" value="Genomic_DNA"/>
</dbReference>
<dbReference type="RefSeq" id="YP_001129350.1">
    <property type="nucleotide sequence ID" value="NC_009333.1"/>
</dbReference>
<dbReference type="BioGRID" id="1777014">
    <property type="interactions" value="9"/>
</dbReference>
<dbReference type="DNASU" id="4961511"/>
<dbReference type="GeneID" id="4961511"/>
<dbReference type="KEGG" id="vg:4961511"/>
<dbReference type="Proteomes" id="UP000000942">
    <property type="component" value="Segment"/>
</dbReference>
<dbReference type="GO" id="GO:0033644">
    <property type="term" value="C:host cell membrane"/>
    <property type="evidence" value="ECO:0007669"/>
    <property type="project" value="UniProtKB-SubCell"/>
</dbReference>
<dbReference type="GO" id="GO:0016020">
    <property type="term" value="C:membrane"/>
    <property type="evidence" value="ECO:0007669"/>
    <property type="project" value="UniProtKB-KW"/>
</dbReference>
<dbReference type="GO" id="GO:0052150">
    <property type="term" value="P:symbiont-mediated perturbation of host apoptosis"/>
    <property type="evidence" value="ECO:0007669"/>
    <property type="project" value="UniProtKB-KW"/>
</dbReference>
<dbReference type="InterPro" id="IPR021022">
    <property type="entry name" value="HHSV-8_K1_cytoplasmic_dom"/>
</dbReference>
<dbReference type="InterPro" id="IPR004121">
    <property type="entry name" value="K1_C"/>
</dbReference>
<dbReference type="Pfam" id="PF02960">
    <property type="entry name" value="K1"/>
    <property type="match status" value="1"/>
</dbReference>
<dbReference type="Pfam" id="PF11049">
    <property type="entry name" value="KSHV_K1"/>
    <property type="match status" value="1"/>
</dbReference>
<accession>Q2HRD5</accession>
<proteinExistence type="evidence at protein level"/>
<comment type="function">
    <text evidence="2 3 4">Promotes host cell survival pathways and may contribute to pathogenesis by preventing infected cells from undergoing apoptosis. Acts in host B-cells by mimicking the activated B-cell receptor complex. The cytoplasmic tail of K1 can induce the phosphorylation of a number of different kinases, leading to the activation of survival signaling pathways.</text>
</comment>
<comment type="subunit">
    <text evidence="2">Homooligomer.</text>
</comment>
<comment type="subcellular location">
    <subcellularLocation>
        <location evidence="5">Host membrane</location>
        <topology evidence="5">Single-pass type I membrane protein</topology>
    </subcellularLocation>
</comment>
<organism>
    <name type="scientific">Human herpesvirus 8 type P (isolate GK18)</name>
    <name type="common">HHV-8</name>
    <name type="synonym">Kaposi's sarcoma-associated herpesvirus</name>
    <dbReference type="NCBI Taxonomy" id="868565"/>
    <lineage>
        <taxon>Viruses</taxon>
        <taxon>Duplodnaviria</taxon>
        <taxon>Heunggongvirae</taxon>
        <taxon>Peploviricota</taxon>
        <taxon>Herviviricetes</taxon>
        <taxon>Herpesvirales</taxon>
        <taxon>Orthoherpesviridae</taxon>
        <taxon>Gammaherpesvirinae</taxon>
        <taxon>Rhadinovirus</taxon>
        <taxon>Rhadinovirus humangamma8</taxon>
        <taxon>Human herpesvirus 8</taxon>
    </lineage>
</organism>
<sequence length="279" mass="31162">MFLYVVCSLAVCFRGLLSLSLQSSPNLCPGVISTPYTLTCPSNTSLPTSWYCNDTRLLRVTQGTLTVDTLICNFSCVGQSGHRYSLWITWYAQPVLQTFCGQPSNTVTCGQHVTLYCSTSGNNVTVWHLPNGQNETVSQTKYYNFTLMNQTEGCYACSNGLSSRLSNRLCFSARCANITPETHTVSVSSTTGFRTFATAPTLFVMKEVKSTYLYIQEHLLVFMTLVALIGTMCGILGTIIFAHCQKQRDSNKTVPQQLQDYYSLHDLCTEDYTQPVDWY</sequence>
<evidence type="ECO:0000255" key="1"/>
<evidence type="ECO:0000269" key="2">
    <source>
    </source>
</evidence>
<evidence type="ECO:0000269" key="3">
    <source>
    </source>
</evidence>
<evidence type="ECO:0000269" key="4">
    <source>
    </source>
</evidence>
<evidence type="ECO:0000305" key="5"/>
<gene>
    <name type="primary">K1</name>
</gene>
<organismHost>
    <name type="scientific">Homo sapiens</name>
    <name type="common">Human</name>
    <dbReference type="NCBI Taxonomy" id="9606"/>
</organismHost>
<feature type="signal peptide" evidence="1">
    <location>
        <begin position="1"/>
        <end position="18"/>
    </location>
</feature>
<feature type="chain" id="PRO_0000423776" description="Protein K1">
    <location>
        <begin position="19"/>
        <end position="279"/>
    </location>
</feature>
<feature type="topological domain" description="Extracellular" evidence="1">
    <location>
        <begin position="19"/>
        <end position="220"/>
    </location>
</feature>
<feature type="transmembrane region" description="Helical" evidence="1">
    <location>
        <begin position="221"/>
        <end position="241"/>
    </location>
</feature>
<feature type="topological domain" description="Cytoplasmic" evidence="1">
    <location>
        <begin position="242"/>
        <end position="279"/>
    </location>
</feature>
<keyword id="KW-1043">Host membrane</keyword>
<keyword id="KW-0945">Host-virus interaction</keyword>
<keyword id="KW-0472">Membrane</keyword>
<keyword id="KW-1119">Modulation of host cell apoptosis by virus</keyword>
<keyword id="KW-1185">Reference proteome</keyword>
<keyword id="KW-0732">Signal</keyword>
<keyword id="KW-0812">Transmembrane</keyword>
<keyword id="KW-1133">Transmembrane helix</keyword>
<protein>
    <recommendedName>
        <fullName>Protein K1</fullName>
    </recommendedName>
</protein>
<name>K1_HHV8P</name>